<comment type="function">
    <text evidence="1">Phosphorolytic 3'-5' exoribonuclease that plays an important role in tRNA 3'-end maturation. Removes nucleotide residues following the 3'-CCA terminus of tRNAs; can also add nucleotides to the ends of RNA molecules by using nucleoside diphosphates as substrates, but this may not be physiologically important. Probably plays a role in initiation of 16S rRNA degradation (leading to ribosome degradation) during starvation.</text>
</comment>
<comment type="catalytic activity">
    <reaction evidence="1">
        <text>tRNA(n+1) + phosphate = tRNA(n) + a ribonucleoside 5'-diphosphate</text>
        <dbReference type="Rhea" id="RHEA:10628"/>
        <dbReference type="Rhea" id="RHEA-COMP:17343"/>
        <dbReference type="Rhea" id="RHEA-COMP:17344"/>
        <dbReference type="ChEBI" id="CHEBI:43474"/>
        <dbReference type="ChEBI" id="CHEBI:57930"/>
        <dbReference type="ChEBI" id="CHEBI:173114"/>
        <dbReference type="EC" id="2.7.7.56"/>
    </reaction>
</comment>
<comment type="subunit">
    <text evidence="1">Homohexameric ring arranged as a trimer of dimers.</text>
</comment>
<comment type="similarity">
    <text evidence="1">Belongs to the RNase PH family.</text>
</comment>
<comment type="sequence caution" evidence="2">
    <conflict type="erroneous initiation">
        <sequence resource="EMBL-CDS" id="BAC08144"/>
    </conflict>
    <text>Extended N-terminus.</text>
</comment>
<sequence>MGWQRPDGRQPQELRSHQFQRHFTQFALGSVLAQAGQTQVLCTVSFKEGVPKFLEGTGQGWLTAEYRMLPSATRPRQEREFLKLSGRTQEIQRLIGRSLRSAVDLSLLGECTLIVDADVLQADAGTRSLAITGGYIALVDALSALLQQGVLRKSPLRHQVAAVSVGLIDDEPYLDLSYAEDVAASVDFNVVMTGSGQFIEVQGTAEMGSFDRGTLDRLLDVARQGIQELIEIQQRVLAPSHE</sequence>
<evidence type="ECO:0000255" key="1">
    <source>
        <dbReference type="HAMAP-Rule" id="MF_00564"/>
    </source>
</evidence>
<evidence type="ECO:0000305" key="2"/>
<name>RNPH_THEVB</name>
<reference key="1">
    <citation type="journal article" date="2002" name="DNA Res.">
        <title>Complete genome structure of the thermophilic cyanobacterium Thermosynechococcus elongatus BP-1.</title>
        <authorList>
            <person name="Nakamura Y."/>
            <person name="Kaneko T."/>
            <person name="Sato S."/>
            <person name="Ikeuchi M."/>
            <person name="Katoh H."/>
            <person name="Sasamoto S."/>
            <person name="Watanabe A."/>
            <person name="Iriguchi M."/>
            <person name="Kawashima K."/>
            <person name="Kimura T."/>
            <person name="Kishida Y."/>
            <person name="Kiyokawa C."/>
            <person name="Kohara M."/>
            <person name="Matsumoto M."/>
            <person name="Matsuno A."/>
            <person name="Nakazaki N."/>
            <person name="Shimpo S."/>
            <person name="Sugimoto M."/>
            <person name="Takeuchi C."/>
            <person name="Yamada M."/>
            <person name="Tabata S."/>
        </authorList>
    </citation>
    <scope>NUCLEOTIDE SEQUENCE [LARGE SCALE GENOMIC DNA]</scope>
    <source>
        <strain>NIES-2133 / IAM M-273 / BP-1</strain>
    </source>
</reference>
<dbReference type="EC" id="2.7.7.56" evidence="1"/>
<dbReference type="EMBL" id="BA000039">
    <property type="protein sequence ID" value="BAC08144.1"/>
    <property type="status" value="ALT_INIT"/>
    <property type="molecule type" value="Genomic_DNA"/>
</dbReference>
<dbReference type="RefSeq" id="NP_681382.1">
    <property type="nucleotide sequence ID" value="NC_004113.1"/>
</dbReference>
<dbReference type="RefSeq" id="WP_164920723.1">
    <property type="nucleotide sequence ID" value="NC_004113.1"/>
</dbReference>
<dbReference type="SMR" id="Q8DLA4"/>
<dbReference type="STRING" id="197221.gene:10747182"/>
<dbReference type="EnsemblBacteria" id="BAC08144">
    <property type="protein sequence ID" value="BAC08144"/>
    <property type="gene ID" value="BAC08144"/>
</dbReference>
<dbReference type="KEGG" id="tel:tlr0592"/>
<dbReference type="PATRIC" id="fig|197221.4.peg.626"/>
<dbReference type="eggNOG" id="COG0689">
    <property type="taxonomic scope" value="Bacteria"/>
</dbReference>
<dbReference type="Proteomes" id="UP000000440">
    <property type="component" value="Chromosome"/>
</dbReference>
<dbReference type="GO" id="GO:0000175">
    <property type="term" value="F:3'-5'-RNA exonuclease activity"/>
    <property type="evidence" value="ECO:0007669"/>
    <property type="project" value="UniProtKB-UniRule"/>
</dbReference>
<dbReference type="GO" id="GO:0000049">
    <property type="term" value="F:tRNA binding"/>
    <property type="evidence" value="ECO:0007669"/>
    <property type="project" value="UniProtKB-UniRule"/>
</dbReference>
<dbReference type="GO" id="GO:0009022">
    <property type="term" value="F:tRNA nucleotidyltransferase activity"/>
    <property type="evidence" value="ECO:0007669"/>
    <property type="project" value="UniProtKB-UniRule"/>
</dbReference>
<dbReference type="GO" id="GO:0016075">
    <property type="term" value="P:rRNA catabolic process"/>
    <property type="evidence" value="ECO:0007669"/>
    <property type="project" value="UniProtKB-UniRule"/>
</dbReference>
<dbReference type="GO" id="GO:0006364">
    <property type="term" value="P:rRNA processing"/>
    <property type="evidence" value="ECO:0007669"/>
    <property type="project" value="UniProtKB-KW"/>
</dbReference>
<dbReference type="GO" id="GO:0008033">
    <property type="term" value="P:tRNA processing"/>
    <property type="evidence" value="ECO:0007669"/>
    <property type="project" value="UniProtKB-UniRule"/>
</dbReference>
<dbReference type="CDD" id="cd11362">
    <property type="entry name" value="RNase_PH_bact"/>
    <property type="match status" value="1"/>
</dbReference>
<dbReference type="FunFam" id="3.30.230.70:FF:000003">
    <property type="entry name" value="Ribonuclease PH"/>
    <property type="match status" value="1"/>
</dbReference>
<dbReference type="Gene3D" id="3.30.230.70">
    <property type="entry name" value="GHMP Kinase, N-terminal domain"/>
    <property type="match status" value="1"/>
</dbReference>
<dbReference type="HAMAP" id="MF_00564">
    <property type="entry name" value="RNase_PH"/>
    <property type="match status" value="1"/>
</dbReference>
<dbReference type="InterPro" id="IPR001247">
    <property type="entry name" value="ExoRNase_PH_dom1"/>
</dbReference>
<dbReference type="InterPro" id="IPR015847">
    <property type="entry name" value="ExoRNase_PH_dom2"/>
</dbReference>
<dbReference type="InterPro" id="IPR036345">
    <property type="entry name" value="ExoRNase_PH_dom2_sf"/>
</dbReference>
<dbReference type="InterPro" id="IPR027408">
    <property type="entry name" value="PNPase/RNase_PH_dom_sf"/>
</dbReference>
<dbReference type="InterPro" id="IPR020568">
    <property type="entry name" value="Ribosomal_Su5_D2-typ_SF"/>
</dbReference>
<dbReference type="InterPro" id="IPR050080">
    <property type="entry name" value="RNase_PH"/>
</dbReference>
<dbReference type="InterPro" id="IPR002381">
    <property type="entry name" value="RNase_PH_bac-type"/>
</dbReference>
<dbReference type="InterPro" id="IPR018336">
    <property type="entry name" value="RNase_PH_CS"/>
</dbReference>
<dbReference type="NCBIfam" id="TIGR01966">
    <property type="entry name" value="RNasePH"/>
    <property type="match status" value="1"/>
</dbReference>
<dbReference type="PANTHER" id="PTHR11953">
    <property type="entry name" value="EXOSOME COMPLEX COMPONENT"/>
    <property type="match status" value="1"/>
</dbReference>
<dbReference type="PANTHER" id="PTHR11953:SF0">
    <property type="entry name" value="EXOSOME COMPLEX COMPONENT RRP41"/>
    <property type="match status" value="1"/>
</dbReference>
<dbReference type="Pfam" id="PF01138">
    <property type="entry name" value="RNase_PH"/>
    <property type="match status" value="1"/>
</dbReference>
<dbReference type="Pfam" id="PF03725">
    <property type="entry name" value="RNase_PH_C"/>
    <property type="match status" value="1"/>
</dbReference>
<dbReference type="SUPFAM" id="SSF55666">
    <property type="entry name" value="Ribonuclease PH domain 2-like"/>
    <property type="match status" value="1"/>
</dbReference>
<dbReference type="SUPFAM" id="SSF54211">
    <property type="entry name" value="Ribosomal protein S5 domain 2-like"/>
    <property type="match status" value="1"/>
</dbReference>
<dbReference type="PROSITE" id="PS01277">
    <property type="entry name" value="RIBONUCLEASE_PH"/>
    <property type="match status" value="1"/>
</dbReference>
<gene>
    <name evidence="1" type="primary">rph</name>
    <name type="ordered locus">tlr0592</name>
</gene>
<keyword id="KW-0548">Nucleotidyltransferase</keyword>
<keyword id="KW-1185">Reference proteome</keyword>
<keyword id="KW-0694">RNA-binding</keyword>
<keyword id="KW-0698">rRNA processing</keyword>
<keyword id="KW-0808">Transferase</keyword>
<keyword id="KW-0819">tRNA processing</keyword>
<keyword id="KW-0820">tRNA-binding</keyword>
<accession>Q8DLA4</accession>
<proteinExistence type="inferred from homology"/>
<organism>
    <name type="scientific">Thermosynechococcus vestitus (strain NIES-2133 / IAM M-273 / BP-1)</name>
    <dbReference type="NCBI Taxonomy" id="197221"/>
    <lineage>
        <taxon>Bacteria</taxon>
        <taxon>Bacillati</taxon>
        <taxon>Cyanobacteriota</taxon>
        <taxon>Cyanophyceae</taxon>
        <taxon>Acaryochloridales</taxon>
        <taxon>Thermosynechococcaceae</taxon>
        <taxon>Thermosynechococcus</taxon>
    </lineage>
</organism>
<protein>
    <recommendedName>
        <fullName evidence="1">Ribonuclease PH</fullName>
        <shortName evidence="1">RNase PH</shortName>
        <ecNumber evidence="1">2.7.7.56</ecNumber>
    </recommendedName>
    <alternativeName>
        <fullName evidence="1">tRNA nucleotidyltransferase</fullName>
    </alternativeName>
</protein>
<feature type="chain" id="PRO_0000139941" description="Ribonuclease PH">
    <location>
        <begin position="1"/>
        <end position="242"/>
    </location>
</feature>
<feature type="binding site" evidence="1">
    <location>
        <position position="87"/>
    </location>
    <ligand>
        <name>phosphate</name>
        <dbReference type="ChEBI" id="CHEBI:43474"/>
        <note>substrate</note>
    </ligand>
</feature>
<feature type="binding site" evidence="1">
    <location>
        <begin position="125"/>
        <end position="127"/>
    </location>
    <ligand>
        <name>phosphate</name>
        <dbReference type="ChEBI" id="CHEBI:43474"/>
        <note>substrate</note>
    </ligand>
</feature>